<keyword id="KW-0067">ATP-binding</keyword>
<keyword id="KW-0436">Ligase</keyword>
<keyword id="KW-0547">Nucleotide-binding</keyword>
<keyword id="KW-0658">Purine biosynthesis</keyword>
<keyword id="KW-1185">Reference proteome</keyword>
<evidence type="ECO:0000255" key="1">
    <source>
        <dbReference type="HAMAP-Rule" id="MF_00137"/>
    </source>
</evidence>
<accession>A0Q1J4</accession>
<dbReference type="EC" id="6.3.2.6" evidence="1"/>
<dbReference type="EMBL" id="CP000382">
    <property type="protein sequence ID" value="ABK61768.1"/>
    <property type="molecule type" value="Genomic_DNA"/>
</dbReference>
<dbReference type="RefSeq" id="WP_011722490.1">
    <property type="nucleotide sequence ID" value="NC_008593.1"/>
</dbReference>
<dbReference type="SMR" id="A0Q1J4"/>
<dbReference type="STRING" id="386415.NT01CX_2423"/>
<dbReference type="KEGG" id="cno:NT01CX_2423"/>
<dbReference type="PATRIC" id="fig|386415.7.peg.1526"/>
<dbReference type="eggNOG" id="COG0152">
    <property type="taxonomic scope" value="Bacteria"/>
</dbReference>
<dbReference type="HOGENOM" id="CLU_061495_2_0_9"/>
<dbReference type="UniPathway" id="UPA00074">
    <property type="reaction ID" value="UER00131"/>
</dbReference>
<dbReference type="Proteomes" id="UP000008220">
    <property type="component" value="Chromosome"/>
</dbReference>
<dbReference type="GO" id="GO:0005524">
    <property type="term" value="F:ATP binding"/>
    <property type="evidence" value="ECO:0007669"/>
    <property type="project" value="UniProtKB-KW"/>
</dbReference>
<dbReference type="GO" id="GO:0004639">
    <property type="term" value="F:phosphoribosylaminoimidazolesuccinocarboxamide synthase activity"/>
    <property type="evidence" value="ECO:0007669"/>
    <property type="project" value="UniProtKB-UniRule"/>
</dbReference>
<dbReference type="GO" id="GO:0006189">
    <property type="term" value="P:'de novo' IMP biosynthetic process"/>
    <property type="evidence" value="ECO:0007669"/>
    <property type="project" value="UniProtKB-UniRule"/>
</dbReference>
<dbReference type="GO" id="GO:0009236">
    <property type="term" value="P:cobalamin biosynthetic process"/>
    <property type="evidence" value="ECO:0007669"/>
    <property type="project" value="InterPro"/>
</dbReference>
<dbReference type="CDD" id="cd01415">
    <property type="entry name" value="SAICAR_synt_PurC"/>
    <property type="match status" value="1"/>
</dbReference>
<dbReference type="FunFam" id="3.30.470.20:FF:000006">
    <property type="entry name" value="Phosphoribosylaminoimidazole-succinocarboxamide synthase"/>
    <property type="match status" value="1"/>
</dbReference>
<dbReference type="Gene3D" id="3.30.470.20">
    <property type="entry name" value="ATP-grasp fold, B domain"/>
    <property type="match status" value="1"/>
</dbReference>
<dbReference type="Gene3D" id="3.30.200.20">
    <property type="entry name" value="Phosphorylase Kinase, domain 1"/>
    <property type="match status" value="1"/>
</dbReference>
<dbReference type="HAMAP" id="MF_00137">
    <property type="entry name" value="SAICAR_synth"/>
    <property type="match status" value="1"/>
</dbReference>
<dbReference type="InterPro" id="IPR028923">
    <property type="entry name" value="SAICAR_synt/ADE2_N"/>
</dbReference>
<dbReference type="InterPro" id="IPR033934">
    <property type="entry name" value="SAICAR_synt_PurC"/>
</dbReference>
<dbReference type="InterPro" id="IPR001636">
    <property type="entry name" value="SAICAR_synth"/>
</dbReference>
<dbReference type="InterPro" id="IPR050089">
    <property type="entry name" value="SAICAR_synthetase"/>
</dbReference>
<dbReference type="InterPro" id="IPR018236">
    <property type="entry name" value="SAICAR_synthetase_CS"/>
</dbReference>
<dbReference type="NCBIfam" id="TIGR00081">
    <property type="entry name" value="purC"/>
    <property type="match status" value="1"/>
</dbReference>
<dbReference type="PANTHER" id="PTHR43599">
    <property type="entry name" value="MULTIFUNCTIONAL PROTEIN ADE2"/>
    <property type="match status" value="1"/>
</dbReference>
<dbReference type="PANTHER" id="PTHR43599:SF3">
    <property type="entry name" value="SI:DKEY-6E2.2"/>
    <property type="match status" value="1"/>
</dbReference>
<dbReference type="Pfam" id="PF01259">
    <property type="entry name" value="SAICAR_synt"/>
    <property type="match status" value="1"/>
</dbReference>
<dbReference type="SUPFAM" id="SSF56104">
    <property type="entry name" value="SAICAR synthase-like"/>
    <property type="match status" value="1"/>
</dbReference>
<dbReference type="PROSITE" id="PS01057">
    <property type="entry name" value="SAICAR_SYNTHETASE_1"/>
    <property type="match status" value="1"/>
</dbReference>
<dbReference type="PROSITE" id="PS01058">
    <property type="entry name" value="SAICAR_SYNTHETASE_2"/>
    <property type="match status" value="1"/>
</dbReference>
<organism>
    <name type="scientific">Clostridium novyi (strain NT)</name>
    <dbReference type="NCBI Taxonomy" id="386415"/>
    <lineage>
        <taxon>Bacteria</taxon>
        <taxon>Bacillati</taxon>
        <taxon>Bacillota</taxon>
        <taxon>Clostridia</taxon>
        <taxon>Eubacteriales</taxon>
        <taxon>Clostridiaceae</taxon>
        <taxon>Clostridium</taxon>
    </lineage>
</organism>
<gene>
    <name evidence="1" type="primary">purC</name>
    <name type="ordered locus">NT01CX_2423</name>
</gene>
<reference key="1">
    <citation type="journal article" date="2006" name="Nat. Biotechnol.">
        <title>The genome and transcriptomes of the anti-tumor agent Clostridium novyi-NT.</title>
        <authorList>
            <person name="Bettegowda C."/>
            <person name="Huang X."/>
            <person name="Lin J."/>
            <person name="Cheong I."/>
            <person name="Kohli M."/>
            <person name="Szabo S.A."/>
            <person name="Zhang X."/>
            <person name="Diaz L.A. Jr."/>
            <person name="Velculescu V.E."/>
            <person name="Parmigiani G."/>
            <person name="Kinzler K.W."/>
            <person name="Vogelstein B."/>
            <person name="Zhou S."/>
        </authorList>
    </citation>
    <scope>NUCLEOTIDE SEQUENCE [LARGE SCALE GENOMIC DNA]</scope>
    <source>
        <strain>NT</strain>
    </source>
</reference>
<proteinExistence type="inferred from homology"/>
<feature type="chain" id="PRO_1000071446" description="Phosphoribosylaminoimidazole-succinocarboxamide synthase">
    <location>
        <begin position="1"/>
        <end position="235"/>
    </location>
</feature>
<sequence length="235" mass="27105">MEKKMLYEGKAKKVYEAEDKDHVIIYYKDDATAFNGAKKSQIDHKGILNNNITSAIFEMLHEKGIETHFEKKLNEREQLCKKVEIVPLEVIVRNVAAGSMAKRLGVSEGKELNTTIFEICYKNDELGDPLINDYHAVALGLATFDELKEIYNITSNVNNILKEFFLKQNIKLIDFKLEFGRFNGKIILADEISPDTCRFWDATTNEKLDKDRFRRDMGNVEEAYIEILNRISNAK</sequence>
<comment type="catalytic activity">
    <reaction evidence="1">
        <text>5-amino-1-(5-phospho-D-ribosyl)imidazole-4-carboxylate + L-aspartate + ATP = (2S)-2-[5-amino-1-(5-phospho-beta-D-ribosyl)imidazole-4-carboxamido]succinate + ADP + phosphate + 2 H(+)</text>
        <dbReference type="Rhea" id="RHEA:22628"/>
        <dbReference type="ChEBI" id="CHEBI:15378"/>
        <dbReference type="ChEBI" id="CHEBI:29991"/>
        <dbReference type="ChEBI" id="CHEBI:30616"/>
        <dbReference type="ChEBI" id="CHEBI:43474"/>
        <dbReference type="ChEBI" id="CHEBI:58443"/>
        <dbReference type="ChEBI" id="CHEBI:77657"/>
        <dbReference type="ChEBI" id="CHEBI:456216"/>
        <dbReference type="EC" id="6.3.2.6"/>
    </reaction>
</comment>
<comment type="pathway">
    <text evidence="1">Purine metabolism; IMP biosynthesis via de novo pathway; 5-amino-1-(5-phospho-D-ribosyl)imidazole-4-carboxamide from 5-amino-1-(5-phospho-D-ribosyl)imidazole-4-carboxylate: step 1/2.</text>
</comment>
<comment type="similarity">
    <text evidence="1">Belongs to the SAICAR synthetase family.</text>
</comment>
<name>PUR7_CLONN</name>
<protein>
    <recommendedName>
        <fullName evidence="1">Phosphoribosylaminoimidazole-succinocarboxamide synthase</fullName>
        <ecNumber evidence="1">6.3.2.6</ecNumber>
    </recommendedName>
    <alternativeName>
        <fullName evidence="1">SAICAR synthetase</fullName>
    </alternativeName>
</protein>